<reference key="1">
    <citation type="journal article" date="2000" name="Proc. Natl. Acad. Sci. U.S.A.">
        <title>Genome sequence of Halobacterium species NRC-1.</title>
        <authorList>
            <person name="Ng W.V."/>
            <person name="Kennedy S.P."/>
            <person name="Mahairas G.G."/>
            <person name="Berquist B."/>
            <person name="Pan M."/>
            <person name="Shukla H.D."/>
            <person name="Lasky S.R."/>
            <person name="Baliga N.S."/>
            <person name="Thorsson V."/>
            <person name="Sbrogna J."/>
            <person name="Swartzell S."/>
            <person name="Weir D."/>
            <person name="Hall J."/>
            <person name="Dahl T.A."/>
            <person name="Welti R."/>
            <person name="Goo Y.A."/>
            <person name="Leithauser B."/>
            <person name="Keller K."/>
            <person name="Cruz R."/>
            <person name="Danson M.J."/>
            <person name="Hough D.W."/>
            <person name="Maddocks D.G."/>
            <person name="Jablonski P.E."/>
            <person name="Krebs M.P."/>
            <person name="Angevine C.M."/>
            <person name="Dale H."/>
            <person name="Isenbarger T.A."/>
            <person name="Peck R.F."/>
            <person name="Pohlschroder M."/>
            <person name="Spudich J.L."/>
            <person name="Jung K.-H."/>
            <person name="Alam M."/>
            <person name="Freitas T."/>
            <person name="Hou S."/>
            <person name="Daniels C.J."/>
            <person name="Dennis P.P."/>
            <person name="Omer A.D."/>
            <person name="Ebhardt H."/>
            <person name="Lowe T.M."/>
            <person name="Liang P."/>
            <person name="Riley M."/>
            <person name="Hood L."/>
            <person name="DasSarma S."/>
        </authorList>
    </citation>
    <scope>NUCLEOTIDE SEQUENCE [LARGE SCALE GENOMIC DNA]</scope>
    <source>
        <strain>ATCC 700922 / JCM 11081 / NRC-1</strain>
    </source>
</reference>
<keyword id="KW-0028">Amino-acid biosynthesis</keyword>
<keyword id="KW-0963">Cytoplasm</keyword>
<keyword id="KW-0315">Glutamine amidotransferase</keyword>
<keyword id="KW-0368">Histidine biosynthesis</keyword>
<keyword id="KW-0378">Hydrolase</keyword>
<keyword id="KW-0456">Lyase</keyword>
<keyword id="KW-1185">Reference proteome</keyword>
<evidence type="ECO:0000255" key="1">
    <source>
        <dbReference type="HAMAP-Rule" id="MF_00278"/>
    </source>
</evidence>
<evidence type="ECO:0000305" key="2"/>
<dbReference type="EC" id="4.3.2.10" evidence="1"/>
<dbReference type="EC" id="3.5.1.2" evidence="1"/>
<dbReference type="EMBL" id="AE004437">
    <property type="protein sequence ID" value="AAG20234.1"/>
    <property type="status" value="ALT_INIT"/>
    <property type="molecule type" value="Genomic_DNA"/>
</dbReference>
<dbReference type="PIR" id="F84358">
    <property type="entry name" value="F84358"/>
</dbReference>
<dbReference type="RefSeq" id="WP_010903536.1">
    <property type="nucleotide sequence ID" value="NC_002607.1"/>
</dbReference>
<dbReference type="SMR" id="Q9HNI6"/>
<dbReference type="FunCoup" id="Q9HNI6">
    <property type="interactions" value="53"/>
</dbReference>
<dbReference type="STRING" id="64091.VNG_2087G"/>
<dbReference type="PaxDb" id="64091-VNG_2087G"/>
<dbReference type="GeneID" id="68694662"/>
<dbReference type="KEGG" id="hal:VNG_2087G"/>
<dbReference type="PATRIC" id="fig|64091.14.peg.1593"/>
<dbReference type="HOGENOM" id="CLU_071837_2_1_2"/>
<dbReference type="InParanoid" id="Q9HNI6"/>
<dbReference type="OrthoDB" id="33401at2157"/>
<dbReference type="PhylomeDB" id="Q9HNI6"/>
<dbReference type="UniPathway" id="UPA00031">
    <property type="reaction ID" value="UER00010"/>
</dbReference>
<dbReference type="Proteomes" id="UP000000554">
    <property type="component" value="Chromosome"/>
</dbReference>
<dbReference type="GO" id="GO:0005737">
    <property type="term" value="C:cytoplasm"/>
    <property type="evidence" value="ECO:0007669"/>
    <property type="project" value="UniProtKB-SubCell"/>
</dbReference>
<dbReference type="GO" id="GO:0004359">
    <property type="term" value="F:glutaminase activity"/>
    <property type="evidence" value="ECO:0007669"/>
    <property type="project" value="UniProtKB-EC"/>
</dbReference>
<dbReference type="GO" id="GO:0000107">
    <property type="term" value="F:imidazoleglycerol-phosphate synthase activity"/>
    <property type="evidence" value="ECO:0000318"/>
    <property type="project" value="GO_Central"/>
</dbReference>
<dbReference type="GO" id="GO:0016829">
    <property type="term" value="F:lyase activity"/>
    <property type="evidence" value="ECO:0007669"/>
    <property type="project" value="UniProtKB-KW"/>
</dbReference>
<dbReference type="GO" id="GO:0000105">
    <property type="term" value="P:L-histidine biosynthetic process"/>
    <property type="evidence" value="ECO:0007669"/>
    <property type="project" value="UniProtKB-UniRule"/>
</dbReference>
<dbReference type="CDD" id="cd01748">
    <property type="entry name" value="GATase1_IGP_Synthase"/>
    <property type="match status" value="1"/>
</dbReference>
<dbReference type="Gene3D" id="3.40.50.880">
    <property type="match status" value="1"/>
</dbReference>
<dbReference type="HAMAP" id="MF_00278">
    <property type="entry name" value="HisH"/>
    <property type="match status" value="1"/>
</dbReference>
<dbReference type="InterPro" id="IPR029062">
    <property type="entry name" value="Class_I_gatase-like"/>
</dbReference>
<dbReference type="InterPro" id="IPR017926">
    <property type="entry name" value="GATASE"/>
</dbReference>
<dbReference type="InterPro" id="IPR010139">
    <property type="entry name" value="Imidazole-glycPsynth_HisH"/>
</dbReference>
<dbReference type="NCBIfam" id="TIGR01855">
    <property type="entry name" value="IMP_synth_hisH"/>
    <property type="match status" value="1"/>
</dbReference>
<dbReference type="PANTHER" id="PTHR42701">
    <property type="entry name" value="IMIDAZOLE GLYCEROL PHOSPHATE SYNTHASE SUBUNIT HISH"/>
    <property type="match status" value="1"/>
</dbReference>
<dbReference type="PANTHER" id="PTHR42701:SF1">
    <property type="entry name" value="IMIDAZOLE GLYCEROL PHOSPHATE SYNTHASE SUBUNIT HISH"/>
    <property type="match status" value="1"/>
</dbReference>
<dbReference type="Pfam" id="PF00117">
    <property type="entry name" value="GATase"/>
    <property type="match status" value="1"/>
</dbReference>
<dbReference type="PIRSF" id="PIRSF000495">
    <property type="entry name" value="Amidotransf_hisH"/>
    <property type="match status" value="1"/>
</dbReference>
<dbReference type="SMART" id="SM01211">
    <property type="entry name" value="GATase_5"/>
    <property type="match status" value="1"/>
</dbReference>
<dbReference type="SUPFAM" id="SSF52317">
    <property type="entry name" value="Class I glutamine amidotransferase-like"/>
    <property type="match status" value="1"/>
</dbReference>
<dbReference type="PROSITE" id="PS51273">
    <property type="entry name" value="GATASE_TYPE_1"/>
    <property type="match status" value="1"/>
</dbReference>
<name>HIS5_HALSA</name>
<gene>
    <name evidence="1" type="primary">hisH</name>
    <name type="ordered locus">VNG_2087G</name>
</gene>
<organism>
    <name type="scientific">Halobacterium salinarum (strain ATCC 700922 / JCM 11081 / NRC-1)</name>
    <name type="common">Halobacterium halobium</name>
    <dbReference type="NCBI Taxonomy" id="64091"/>
    <lineage>
        <taxon>Archaea</taxon>
        <taxon>Methanobacteriati</taxon>
        <taxon>Methanobacteriota</taxon>
        <taxon>Stenosarchaea group</taxon>
        <taxon>Halobacteria</taxon>
        <taxon>Halobacteriales</taxon>
        <taxon>Halobacteriaceae</taxon>
        <taxon>Halobacterium</taxon>
        <taxon>Halobacterium salinarum NRC-34001</taxon>
    </lineage>
</organism>
<feature type="chain" id="PRO_0000152456" description="Imidazole glycerol phosphate synthase subunit HisH">
    <location>
        <begin position="1"/>
        <end position="218"/>
    </location>
</feature>
<feature type="domain" description="Glutamine amidotransferase type-1" evidence="1">
    <location>
        <begin position="12"/>
        <end position="218"/>
    </location>
</feature>
<feature type="active site" description="Nucleophile" evidence="1">
    <location>
        <position position="88"/>
    </location>
</feature>
<feature type="active site" evidence="1">
    <location>
        <position position="196"/>
    </location>
</feature>
<feature type="active site" evidence="1">
    <location>
        <position position="198"/>
    </location>
</feature>
<protein>
    <recommendedName>
        <fullName evidence="1">Imidazole glycerol phosphate synthase subunit HisH</fullName>
        <ecNumber evidence="1">4.3.2.10</ecNumber>
    </recommendedName>
    <alternativeName>
        <fullName evidence="1">IGP synthase glutaminase subunit</fullName>
        <ecNumber evidence="1">3.5.1.2</ecNumber>
    </alternativeName>
    <alternativeName>
        <fullName evidence="1">IGP synthase subunit HisH</fullName>
    </alternativeName>
    <alternativeName>
        <fullName evidence="1">ImGP synthase subunit HisH</fullName>
        <shortName evidence="1">IGPS subunit HisH</shortName>
    </alternativeName>
</protein>
<accession>Q9HNI6</accession>
<proteinExistence type="inferred from homology"/>
<sequence>MDTTGTGQRGASIVVVDYGLGNLRSVTRGLERASADVSIVGDPGALDDADGIVLPGVGAFGDGMENAGPFRDALTDAADEGRPLFGICLGMQMLLSSSEEADHEGQGDARGLDLIPGRNVRFTGTVKVPHMGWNELAVTRDHPLVGGVDGEYAYFVHSYYAAPDDPGHVVAETDYGERFPAVVANDAGNVFGTQFHPEKSGATGLRILRNFVDYCADQ</sequence>
<comment type="function">
    <text evidence="1">IGPS catalyzes the conversion of PRFAR and glutamine to IGP, AICAR and glutamate. The HisH subunit catalyzes the hydrolysis of glutamine to glutamate and ammonia as part of the synthesis of IGP and AICAR. The resulting ammonia molecule is channeled to the active site of HisF.</text>
</comment>
<comment type="catalytic activity">
    <reaction evidence="1">
        <text>5-[(5-phospho-1-deoxy-D-ribulos-1-ylimino)methylamino]-1-(5-phospho-beta-D-ribosyl)imidazole-4-carboxamide + L-glutamine = D-erythro-1-(imidazol-4-yl)glycerol 3-phosphate + 5-amino-1-(5-phospho-beta-D-ribosyl)imidazole-4-carboxamide + L-glutamate + H(+)</text>
        <dbReference type="Rhea" id="RHEA:24793"/>
        <dbReference type="ChEBI" id="CHEBI:15378"/>
        <dbReference type="ChEBI" id="CHEBI:29985"/>
        <dbReference type="ChEBI" id="CHEBI:58278"/>
        <dbReference type="ChEBI" id="CHEBI:58359"/>
        <dbReference type="ChEBI" id="CHEBI:58475"/>
        <dbReference type="ChEBI" id="CHEBI:58525"/>
        <dbReference type="EC" id="4.3.2.10"/>
    </reaction>
</comment>
<comment type="catalytic activity">
    <reaction evidence="1">
        <text>L-glutamine + H2O = L-glutamate + NH4(+)</text>
        <dbReference type="Rhea" id="RHEA:15889"/>
        <dbReference type="ChEBI" id="CHEBI:15377"/>
        <dbReference type="ChEBI" id="CHEBI:28938"/>
        <dbReference type="ChEBI" id="CHEBI:29985"/>
        <dbReference type="ChEBI" id="CHEBI:58359"/>
        <dbReference type="EC" id="3.5.1.2"/>
    </reaction>
</comment>
<comment type="pathway">
    <text evidence="1">Amino-acid biosynthesis; L-histidine biosynthesis; L-histidine from 5-phospho-alpha-D-ribose 1-diphosphate: step 5/9.</text>
</comment>
<comment type="subunit">
    <text evidence="1">Heterodimer of HisH and HisF.</text>
</comment>
<comment type="subcellular location">
    <subcellularLocation>
        <location evidence="1">Cytoplasm</location>
    </subcellularLocation>
</comment>
<comment type="sequence caution" evidence="2">
    <conflict type="erroneous initiation">
        <sequence resource="EMBL-CDS" id="AAG20234"/>
    </conflict>
</comment>